<protein>
    <recommendedName>
        <fullName evidence="1">UPF0246 protein Maqu_2499</fullName>
    </recommendedName>
</protein>
<evidence type="ECO:0000255" key="1">
    <source>
        <dbReference type="HAMAP-Rule" id="MF_00652"/>
    </source>
</evidence>
<feature type="chain" id="PRO_1000061615" description="UPF0246 protein Maqu_2499">
    <location>
        <begin position="1"/>
        <end position="256"/>
    </location>
</feature>
<organism>
    <name type="scientific">Marinobacter nauticus (strain ATCC 700491 / DSM 11845 / VT8)</name>
    <name type="common">Marinobacter aquaeolei</name>
    <dbReference type="NCBI Taxonomy" id="351348"/>
    <lineage>
        <taxon>Bacteria</taxon>
        <taxon>Pseudomonadati</taxon>
        <taxon>Pseudomonadota</taxon>
        <taxon>Gammaproteobacteria</taxon>
        <taxon>Pseudomonadales</taxon>
        <taxon>Marinobacteraceae</taxon>
        <taxon>Marinobacter</taxon>
    </lineage>
</organism>
<sequence length="256" mass="29566">MLMIISPAKTLDYESPLATETHTQPDFLDDACELIDQLKELEPHQVSNLMSISDKLGQLNAERFQTWHTPFTPDNARQAVLAFKGDVYTGLDAESFSNEDFSFAQKHLRILSGLYGLLKPLDLMQPYRLEMGTRFENTRGKDLYAFWGSKITEALNQLLASDDKVLVNLASNEYFKSVQKKHLDARLVTPQFKDWKNGQYKMISFYAKKARGLMCRYAIQNRITQADDLKGFNLDGYYFSEDQSDNNNWVFLRDEQ</sequence>
<proteinExistence type="inferred from homology"/>
<reference key="1">
    <citation type="journal article" date="2011" name="Appl. Environ. Microbiol.">
        <title>Genomic potential of Marinobacter aquaeolei, a biogeochemical 'opportunitroph'.</title>
        <authorList>
            <person name="Singer E."/>
            <person name="Webb E.A."/>
            <person name="Nelson W.C."/>
            <person name="Heidelberg J.F."/>
            <person name="Ivanova N."/>
            <person name="Pati A."/>
            <person name="Edwards K.J."/>
        </authorList>
    </citation>
    <scope>NUCLEOTIDE SEQUENCE [LARGE SCALE GENOMIC DNA]</scope>
    <source>
        <strain>ATCC 700491 / DSM 11845 / VT8</strain>
    </source>
</reference>
<accession>A1U3K5</accession>
<dbReference type="EMBL" id="CP000514">
    <property type="protein sequence ID" value="ABM19574.1"/>
    <property type="molecule type" value="Genomic_DNA"/>
</dbReference>
<dbReference type="SMR" id="A1U3K5"/>
<dbReference type="STRING" id="351348.Maqu_2499"/>
<dbReference type="KEGG" id="maq:Maqu_2499"/>
<dbReference type="eggNOG" id="COG3022">
    <property type="taxonomic scope" value="Bacteria"/>
</dbReference>
<dbReference type="HOGENOM" id="CLU_061989_0_0_6"/>
<dbReference type="OrthoDB" id="9777133at2"/>
<dbReference type="Proteomes" id="UP000000998">
    <property type="component" value="Chromosome"/>
</dbReference>
<dbReference type="GO" id="GO:0005829">
    <property type="term" value="C:cytosol"/>
    <property type="evidence" value="ECO:0007669"/>
    <property type="project" value="TreeGrafter"/>
</dbReference>
<dbReference type="GO" id="GO:0033194">
    <property type="term" value="P:response to hydroperoxide"/>
    <property type="evidence" value="ECO:0007669"/>
    <property type="project" value="TreeGrafter"/>
</dbReference>
<dbReference type="HAMAP" id="MF_00652">
    <property type="entry name" value="UPF0246"/>
    <property type="match status" value="1"/>
</dbReference>
<dbReference type="InterPro" id="IPR005583">
    <property type="entry name" value="YaaA"/>
</dbReference>
<dbReference type="NCBIfam" id="NF002541">
    <property type="entry name" value="PRK02101.1-1"/>
    <property type="match status" value="1"/>
</dbReference>
<dbReference type="NCBIfam" id="NF002542">
    <property type="entry name" value="PRK02101.1-3"/>
    <property type="match status" value="1"/>
</dbReference>
<dbReference type="PANTHER" id="PTHR30283:SF4">
    <property type="entry name" value="PEROXIDE STRESS RESISTANCE PROTEIN YAAA"/>
    <property type="match status" value="1"/>
</dbReference>
<dbReference type="PANTHER" id="PTHR30283">
    <property type="entry name" value="PEROXIDE STRESS RESPONSE PROTEIN YAAA"/>
    <property type="match status" value="1"/>
</dbReference>
<dbReference type="Pfam" id="PF03883">
    <property type="entry name" value="H2O2_YaaD"/>
    <property type="match status" value="1"/>
</dbReference>
<comment type="similarity">
    <text evidence="1">Belongs to the UPF0246 family.</text>
</comment>
<gene>
    <name type="ordered locus">Maqu_2499</name>
</gene>
<name>Y2499_MARN8</name>